<gene>
    <name type="primary">rnhB</name>
    <name type="ordered locus">jhp_1243</name>
</gene>
<evidence type="ECO:0000250" key="1"/>
<evidence type="ECO:0000255" key="2">
    <source>
        <dbReference type="PROSITE-ProRule" id="PRU01319"/>
    </source>
</evidence>
<evidence type="ECO:0000305" key="3"/>
<protein>
    <recommendedName>
        <fullName>Ribonuclease HII</fullName>
        <shortName>RNase HII</shortName>
        <ecNumber>3.1.26.4</ecNumber>
    </recommendedName>
</protein>
<feature type="chain" id="PRO_0000111580" description="Ribonuclease HII">
    <location>
        <begin position="1"/>
        <end position="209"/>
    </location>
</feature>
<feature type="domain" description="RNase H type-2" evidence="2">
    <location>
        <begin position="5"/>
        <end position="202"/>
    </location>
</feature>
<feature type="binding site" evidence="1">
    <location>
        <position position="11"/>
    </location>
    <ligand>
        <name>a divalent metal cation</name>
        <dbReference type="ChEBI" id="CHEBI:60240"/>
    </ligand>
</feature>
<feature type="binding site" evidence="1">
    <location>
        <position position="12"/>
    </location>
    <ligand>
        <name>a divalent metal cation</name>
        <dbReference type="ChEBI" id="CHEBI:60240"/>
    </ligand>
</feature>
<feature type="binding site" evidence="1">
    <location>
        <position position="108"/>
    </location>
    <ligand>
        <name>a divalent metal cation</name>
        <dbReference type="ChEBI" id="CHEBI:60240"/>
    </ligand>
</feature>
<accession>Q9ZJR1</accession>
<sequence>MGCVSMTLGIDEAGRGCLAGSLFVAGVVCNEKIALEFLKMGLKDSKKLSPKKRFFLEDKIKTHGEVGFFVVKKSANEIDHLGLGACLKLAIEEIVENGCSLANEIKIDGNTAFGLNKRYPNIQTIIKGDETIAQIAMASVLAKASKDREMLELHALFKEYGWDKNCGYGTKQHIEAINKLGATPFHRHSFTLKNRILNPKLLEVEQRLV</sequence>
<proteinExistence type="inferred from homology"/>
<comment type="function">
    <text evidence="1">Endonuclease that specifically degrades the RNA of RNA-DNA hybrids.</text>
</comment>
<comment type="catalytic activity">
    <reaction>
        <text>Endonucleolytic cleavage to 5'-phosphomonoester.</text>
        <dbReference type="EC" id="3.1.26.4"/>
    </reaction>
</comment>
<comment type="cofactor">
    <cofactor evidence="1">
        <name>Mn(2+)</name>
        <dbReference type="ChEBI" id="CHEBI:29035"/>
    </cofactor>
    <cofactor evidence="1">
        <name>Mg(2+)</name>
        <dbReference type="ChEBI" id="CHEBI:18420"/>
    </cofactor>
    <text evidence="1">Manganese or magnesium. Binds 1 divalent metal ion per monomer in the absence of substrate. May bind a second metal ion after substrate binding.</text>
</comment>
<comment type="subcellular location">
    <subcellularLocation>
        <location evidence="3">Cytoplasm</location>
    </subcellularLocation>
</comment>
<comment type="similarity">
    <text evidence="3">Belongs to the RNase HII family.</text>
</comment>
<keyword id="KW-0963">Cytoplasm</keyword>
<keyword id="KW-0255">Endonuclease</keyword>
<keyword id="KW-0378">Hydrolase</keyword>
<keyword id="KW-0464">Manganese</keyword>
<keyword id="KW-0479">Metal-binding</keyword>
<keyword id="KW-0540">Nuclease</keyword>
<dbReference type="EC" id="3.1.26.4"/>
<dbReference type="EMBL" id="AE001439">
    <property type="protein sequence ID" value="AAD06828.1"/>
    <property type="molecule type" value="Genomic_DNA"/>
</dbReference>
<dbReference type="PIR" id="F71830">
    <property type="entry name" value="F71830"/>
</dbReference>
<dbReference type="SMR" id="Q9ZJR1"/>
<dbReference type="KEGG" id="hpj:jhp_1243"/>
<dbReference type="eggNOG" id="COG0164">
    <property type="taxonomic scope" value="Bacteria"/>
</dbReference>
<dbReference type="Proteomes" id="UP000000804">
    <property type="component" value="Chromosome"/>
</dbReference>
<dbReference type="GO" id="GO:0005737">
    <property type="term" value="C:cytoplasm"/>
    <property type="evidence" value="ECO:0007669"/>
    <property type="project" value="UniProtKB-SubCell"/>
</dbReference>
<dbReference type="GO" id="GO:0032299">
    <property type="term" value="C:ribonuclease H2 complex"/>
    <property type="evidence" value="ECO:0007669"/>
    <property type="project" value="TreeGrafter"/>
</dbReference>
<dbReference type="GO" id="GO:0030145">
    <property type="term" value="F:manganese ion binding"/>
    <property type="evidence" value="ECO:0007669"/>
    <property type="project" value="UniProtKB-UniRule"/>
</dbReference>
<dbReference type="GO" id="GO:0003723">
    <property type="term" value="F:RNA binding"/>
    <property type="evidence" value="ECO:0007669"/>
    <property type="project" value="InterPro"/>
</dbReference>
<dbReference type="GO" id="GO:0004523">
    <property type="term" value="F:RNA-DNA hybrid ribonuclease activity"/>
    <property type="evidence" value="ECO:0007669"/>
    <property type="project" value="UniProtKB-UniRule"/>
</dbReference>
<dbReference type="GO" id="GO:0043137">
    <property type="term" value="P:DNA replication, removal of RNA primer"/>
    <property type="evidence" value="ECO:0007669"/>
    <property type="project" value="TreeGrafter"/>
</dbReference>
<dbReference type="GO" id="GO:0006298">
    <property type="term" value="P:mismatch repair"/>
    <property type="evidence" value="ECO:0007669"/>
    <property type="project" value="TreeGrafter"/>
</dbReference>
<dbReference type="CDD" id="cd07182">
    <property type="entry name" value="RNase_HII_bacteria_HII_like"/>
    <property type="match status" value="1"/>
</dbReference>
<dbReference type="FunFam" id="3.30.420.10:FF:000204">
    <property type="entry name" value="Ribonuclease HII"/>
    <property type="match status" value="1"/>
</dbReference>
<dbReference type="Gene3D" id="3.30.420.10">
    <property type="entry name" value="Ribonuclease H-like superfamily/Ribonuclease H"/>
    <property type="match status" value="1"/>
</dbReference>
<dbReference type="HAMAP" id="MF_00052_B">
    <property type="entry name" value="RNase_HII_B"/>
    <property type="match status" value="1"/>
</dbReference>
<dbReference type="InterPro" id="IPR022898">
    <property type="entry name" value="RNase_HII"/>
</dbReference>
<dbReference type="InterPro" id="IPR001352">
    <property type="entry name" value="RNase_HII/HIII"/>
</dbReference>
<dbReference type="InterPro" id="IPR024567">
    <property type="entry name" value="RNase_HII/HIII_dom"/>
</dbReference>
<dbReference type="InterPro" id="IPR012337">
    <property type="entry name" value="RNaseH-like_sf"/>
</dbReference>
<dbReference type="InterPro" id="IPR036397">
    <property type="entry name" value="RNaseH_sf"/>
</dbReference>
<dbReference type="NCBIfam" id="NF000595">
    <property type="entry name" value="PRK00015.1-3"/>
    <property type="match status" value="1"/>
</dbReference>
<dbReference type="NCBIfam" id="NF011119">
    <property type="entry name" value="PRK14550.1"/>
    <property type="match status" value="1"/>
</dbReference>
<dbReference type="PANTHER" id="PTHR10954">
    <property type="entry name" value="RIBONUCLEASE H2 SUBUNIT A"/>
    <property type="match status" value="1"/>
</dbReference>
<dbReference type="PANTHER" id="PTHR10954:SF18">
    <property type="entry name" value="RIBONUCLEASE HII"/>
    <property type="match status" value="1"/>
</dbReference>
<dbReference type="Pfam" id="PF01351">
    <property type="entry name" value="RNase_HII"/>
    <property type="match status" value="1"/>
</dbReference>
<dbReference type="SUPFAM" id="SSF53098">
    <property type="entry name" value="Ribonuclease H-like"/>
    <property type="match status" value="1"/>
</dbReference>
<dbReference type="PROSITE" id="PS51975">
    <property type="entry name" value="RNASE_H_2"/>
    <property type="match status" value="1"/>
</dbReference>
<organism>
    <name type="scientific">Helicobacter pylori (strain J99 / ATCC 700824)</name>
    <name type="common">Campylobacter pylori J99</name>
    <dbReference type="NCBI Taxonomy" id="85963"/>
    <lineage>
        <taxon>Bacteria</taxon>
        <taxon>Pseudomonadati</taxon>
        <taxon>Campylobacterota</taxon>
        <taxon>Epsilonproteobacteria</taxon>
        <taxon>Campylobacterales</taxon>
        <taxon>Helicobacteraceae</taxon>
        <taxon>Helicobacter</taxon>
    </lineage>
</organism>
<name>RNH2_HELPJ</name>
<reference key="1">
    <citation type="journal article" date="1999" name="Nature">
        <title>Genomic sequence comparison of two unrelated isolates of the human gastric pathogen Helicobacter pylori.</title>
        <authorList>
            <person name="Alm R.A."/>
            <person name="Ling L.-S.L."/>
            <person name="Moir D.T."/>
            <person name="King B.L."/>
            <person name="Brown E.D."/>
            <person name="Doig P.C."/>
            <person name="Smith D.R."/>
            <person name="Noonan B."/>
            <person name="Guild B.C."/>
            <person name="deJonge B.L."/>
            <person name="Carmel G."/>
            <person name="Tummino P.J."/>
            <person name="Caruso A."/>
            <person name="Uria-Nickelsen M."/>
            <person name="Mills D.M."/>
            <person name="Ives C."/>
            <person name="Gibson R."/>
            <person name="Merberg D."/>
            <person name="Mills S.D."/>
            <person name="Jiang Q."/>
            <person name="Taylor D.E."/>
            <person name="Vovis G.F."/>
            <person name="Trust T.J."/>
        </authorList>
    </citation>
    <scope>NUCLEOTIDE SEQUENCE [LARGE SCALE GENOMIC DNA]</scope>
    <source>
        <strain>J99 / ATCC 700824</strain>
    </source>
</reference>